<keyword id="KW-0687">Ribonucleoprotein</keyword>
<keyword id="KW-0689">Ribosomal protein</keyword>
<reference key="1">
    <citation type="journal article" date="2006" name="Genome Res.">
        <title>Skewed genomic variability in strains of the toxigenic bacterial pathogen, Clostridium perfringens.</title>
        <authorList>
            <person name="Myers G.S.A."/>
            <person name="Rasko D.A."/>
            <person name="Cheung J.K."/>
            <person name="Ravel J."/>
            <person name="Seshadri R."/>
            <person name="DeBoy R.T."/>
            <person name="Ren Q."/>
            <person name="Varga J."/>
            <person name="Awad M.M."/>
            <person name="Brinkac L.M."/>
            <person name="Daugherty S.C."/>
            <person name="Haft D.H."/>
            <person name="Dodson R.J."/>
            <person name="Madupu R."/>
            <person name="Nelson W.C."/>
            <person name="Rosovitz M.J."/>
            <person name="Sullivan S.A."/>
            <person name="Khouri H."/>
            <person name="Dimitrov G.I."/>
            <person name="Watkins K.L."/>
            <person name="Mulligan S."/>
            <person name="Benton J."/>
            <person name="Radune D."/>
            <person name="Fisher D.J."/>
            <person name="Atkins H.S."/>
            <person name="Hiscox T."/>
            <person name="Jost B.H."/>
            <person name="Billington S.J."/>
            <person name="Songer J.G."/>
            <person name="McClane B.A."/>
            <person name="Titball R.W."/>
            <person name="Rood J.I."/>
            <person name="Melville S.B."/>
            <person name="Paulsen I.T."/>
        </authorList>
    </citation>
    <scope>NUCLEOTIDE SEQUENCE [LARGE SCALE GENOMIC DNA]</scope>
    <source>
        <strain>ATCC 13124 / DSM 756 / JCM 1290 / NCIMB 6125 / NCTC 8237 / S 107 / Type A</strain>
    </source>
</reference>
<evidence type="ECO:0000255" key="1">
    <source>
        <dbReference type="HAMAP-Rule" id="MF_00391"/>
    </source>
</evidence>
<evidence type="ECO:0000256" key="2">
    <source>
        <dbReference type="SAM" id="MobiDB-lite"/>
    </source>
</evidence>
<evidence type="ECO:0000305" key="3"/>
<dbReference type="EMBL" id="CP000246">
    <property type="protein sequence ID" value="ABG85048.1"/>
    <property type="molecule type" value="Genomic_DNA"/>
</dbReference>
<dbReference type="RefSeq" id="WP_003451019.1">
    <property type="nucleotide sequence ID" value="NC_008261.1"/>
</dbReference>
<dbReference type="SMR" id="Q0TLY9"/>
<dbReference type="STRING" id="195103.CPF_2997"/>
<dbReference type="PaxDb" id="195103-CPF_2997"/>
<dbReference type="GeneID" id="93000725"/>
<dbReference type="KEGG" id="cpf:CPF_2997"/>
<dbReference type="eggNOG" id="COG0230">
    <property type="taxonomic scope" value="Bacteria"/>
</dbReference>
<dbReference type="HOGENOM" id="CLU_129938_2_0_9"/>
<dbReference type="Proteomes" id="UP000001823">
    <property type="component" value="Chromosome"/>
</dbReference>
<dbReference type="GO" id="GO:1990904">
    <property type="term" value="C:ribonucleoprotein complex"/>
    <property type="evidence" value="ECO:0007669"/>
    <property type="project" value="UniProtKB-KW"/>
</dbReference>
<dbReference type="GO" id="GO:0005840">
    <property type="term" value="C:ribosome"/>
    <property type="evidence" value="ECO:0007669"/>
    <property type="project" value="UniProtKB-KW"/>
</dbReference>
<dbReference type="GO" id="GO:0003735">
    <property type="term" value="F:structural constituent of ribosome"/>
    <property type="evidence" value="ECO:0007669"/>
    <property type="project" value="InterPro"/>
</dbReference>
<dbReference type="GO" id="GO:0006412">
    <property type="term" value="P:translation"/>
    <property type="evidence" value="ECO:0007669"/>
    <property type="project" value="UniProtKB-UniRule"/>
</dbReference>
<dbReference type="FunFam" id="1.10.287.3980:FF:000001">
    <property type="entry name" value="Mitochondrial ribosomal protein L34"/>
    <property type="match status" value="1"/>
</dbReference>
<dbReference type="Gene3D" id="1.10.287.3980">
    <property type="match status" value="1"/>
</dbReference>
<dbReference type="HAMAP" id="MF_00391">
    <property type="entry name" value="Ribosomal_bL34"/>
    <property type="match status" value="1"/>
</dbReference>
<dbReference type="InterPro" id="IPR000271">
    <property type="entry name" value="Ribosomal_bL34"/>
</dbReference>
<dbReference type="InterPro" id="IPR020939">
    <property type="entry name" value="Ribosomal_bL34_CS"/>
</dbReference>
<dbReference type="NCBIfam" id="TIGR01030">
    <property type="entry name" value="rpmH_bact"/>
    <property type="match status" value="1"/>
</dbReference>
<dbReference type="PANTHER" id="PTHR14503:SF4">
    <property type="entry name" value="LARGE RIBOSOMAL SUBUNIT PROTEIN BL34M"/>
    <property type="match status" value="1"/>
</dbReference>
<dbReference type="PANTHER" id="PTHR14503">
    <property type="entry name" value="MITOCHONDRIAL RIBOSOMAL PROTEIN 34 FAMILY MEMBER"/>
    <property type="match status" value="1"/>
</dbReference>
<dbReference type="Pfam" id="PF00468">
    <property type="entry name" value="Ribosomal_L34"/>
    <property type="match status" value="1"/>
</dbReference>
<dbReference type="PROSITE" id="PS00784">
    <property type="entry name" value="RIBOSOMAL_L34"/>
    <property type="match status" value="1"/>
</dbReference>
<proteinExistence type="inferred from homology"/>
<accession>Q0TLY9</accession>
<protein>
    <recommendedName>
        <fullName evidence="1">Large ribosomal subunit protein bL34</fullName>
    </recommendedName>
    <alternativeName>
        <fullName evidence="3">50S ribosomal protein L34</fullName>
    </alternativeName>
</protein>
<sequence>MFMTYQPKKRQRSKEHGFRKRMKTKSGRNVLKRRRQKGRKRLTA</sequence>
<name>RL34_CLOP1</name>
<comment type="similarity">
    <text evidence="1">Belongs to the bacterial ribosomal protein bL34 family.</text>
</comment>
<feature type="chain" id="PRO_1000013322" description="Large ribosomal subunit protein bL34">
    <location>
        <begin position="1"/>
        <end position="44"/>
    </location>
</feature>
<feature type="region of interest" description="Disordered" evidence="2">
    <location>
        <begin position="1"/>
        <end position="44"/>
    </location>
</feature>
<feature type="compositionally biased region" description="Basic residues" evidence="2">
    <location>
        <begin position="7"/>
        <end position="44"/>
    </location>
</feature>
<gene>
    <name evidence="1" type="primary">rpmH</name>
    <name type="ordered locus">CPF_2997</name>
</gene>
<organism>
    <name type="scientific">Clostridium perfringens (strain ATCC 13124 / DSM 756 / JCM 1290 / NCIMB 6125 / NCTC 8237 / Type A)</name>
    <dbReference type="NCBI Taxonomy" id="195103"/>
    <lineage>
        <taxon>Bacteria</taxon>
        <taxon>Bacillati</taxon>
        <taxon>Bacillota</taxon>
        <taxon>Clostridia</taxon>
        <taxon>Eubacteriales</taxon>
        <taxon>Clostridiaceae</taxon>
        <taxon>Clostridium</taxon>
    </lineage>
</organism>